<feature type="chain" id="PRO_0000168502" description="DNA-binding protein H-NS homolog">
    <location>
        <begin position="1"/>
        <end position="135"/>
    </location>
</feature>
<feature type="DNA-binding region" evidence="1">
    <location>
        <begin position="112"/>
        <end position="117"/>
    </location>
</feature>
<dbReference type="EMBL" id="BA000003">
    <property type="protein sequence ID" value="BAB12982.1"/>
    <property type="molecule type" value="Genomic_DNA"/>
</dbReference>
<dbReference type="RefSeq" id="NP_240096.1">
    <property type="nucleotide sequence ID" value="NC_002528.1"/>
</dbReference>
<dbReference type="RefSeq" id="WP_009874226.1">
    <property type="nucleotide sequence ID" value="NZ_AP036055.1"/>
</dbReference>
<dbReference type="SMR" id="P57360"/>
<dbReference type="STRING" id="563178.BUAP5A_267"/>
<dbReference type="EnsemblBacteria" id="BAB12982">
    <property type="protein sequence ID" value="BAB12982"/>
    <property type="gene ID" value="BAB12982"/>
</dbReference>
<dbReference type="KEGG" id="buc:BU272"/>
<dbReference type="PATRIC" id="fig|107806.10.peg.282"/>
<dbReference type="eggNOG" id="COG2916">
    <property type="taxonomic scope" value="Bacteria"/>
</dbReference>
<dbReference type="HOGENOM" id="CLU_117503_0_0_6"/>
<dbReference type="Proteomes" id="UP000001806">
    <property type="component" value="Chromosome"/>
</dbReference>
<dbReference type="GO" id="GO:0005829">
    <property type="term" value="C:cytosol"/>
    <property type="evidence" value="ECO:0007669"/>
    <property type="project" value="TreeGrafter"/>
</dbReference>
<dbReference type="GO" id="GO:0009295">
    <property type="term" value="C:nucleoid"/>
    <property type="evidence" value="ECO:0007669"/>
    <property type="project" value="UniProtKB-SubCell"/>
</dbReference>
<dbReference type="GO" id="GO:0032993">
    <property type="term" value="C:protein-DNA complex"/>
    <property type="evidence" value="ECO:0007669"/>
    <property type="project" value="TreeGrafter"/>
</dbReference>
<dbReference type="GO" id="GO:0003681">
    <property type="term" value="F:bent DNA binding"/>
    <property type="evidence" value="ECO:0007669"/>
    <property type="project" value="TreeGrafter"/>
</dbReference>
<dbReference type="GO" id="GO:0001217">
    <property type="term" value="F:DNA-binding transcription repressor activity"/>
    <property type="evidence" value="ECO:0007669"/>
    <property type="project" value="TreeGrafter"/>
</dbReference>
<dbReference type="GO" id="GO:0003680">
    <property type="term" value="F:minor groove of adenine-thymine-rich DNA binding"/>
    <property type="evidence" value="ECO:0007669"/>
    <property type="project" value="TreeGrafter"/>
</dbReference>
<dbReference type="GO" id="GO:0046983">
    <property type="term" value="F:protein dimerization activity"/>
    <property type="evidence" value="ECO:0007669"/>
    <property type="project" value="InterPro"/>
</dbReference>
<dbReference type="GO" id="GO:0030527">
    <property type="term" value="F:structural constituent of chromatin"/>
    <property type="evidence" value="ECO:0007669"/>
    <property type="project" value="InterPro"/>
</dbReference>
<dbReference type="GO" id="GO:0000976">
    <property type="term" value="F:transcription cis-regulatory region binding"/>
    <property type="evidence" value="ECO:0007669"/>
    <property type="project" value="TreeGrafter"/>
</dbReference>
<dbReference type="FunFam" id="1.10.287.1050:FF:000001">
    <property type="entry name" value="DNA-binding protein"/>
    <property type="match status" value="1"/>
</dbReference>
<dbReference type="Gene3D" id="1.10.287.1050">
    <property type="entry name" value="H-NS histone-like proteins"/>
    <property type="match status" value="1"/>
</dbReference>
<dbReference type="Gene3D" id="4.10.430.10">
    <property type="entry name" value="Histone-like protein H-NS, C-terminal domain"/>
    <property type="match status" value="1"/>
</dbReference>
<dbReference type="InterPro" id="IPR054180">
    <property type="entry name" value="H-NS-like_N"/>
</dbReference>
<dbReference type="InterPro" id="IPR027444">
    <property type="entry name" value="H-NS_C_dom"/>
</dbReference>
<dbReference type="InterPro" id="IPR037150">
    <property type="entry name" value="H-NS_C_dom_sf"/>
</dbReference>
<dbReference type="InterPro" id="IPR001801">
    <property type="entry name" value="Histone_HNS"/>
</dbReference>
<dbReference type="InterPro" id="IPR027454">
    <property type="entry name" value="Histone_HNS_N"/>
</dbReference>
<dbReference type="PANTHER" id="PTHR38097">
    <property type="match status" value="1"/>
</dbReference>
<dbReference type="PANTHER" id="PTHR38097:SF2">
    <property type="entry name" value="DNA-BINDING PROTEIN STPA"/>
    <property type="match status" value="1"/>
</dbReference>
<dbReference type="Pfam" id="PF00816">
    <property type="entry name" value="Histone_HNS"/>
    <property type="match status" value="1"/>
</dbReference>
<dbReference type="Pfam" id="PF22470">
    <property type="entry name" value="Histone_HNS_N"/>
    <property type="match status" value="1"/>
</dbReference>
<dbReference type="PIRSF" id="PIRSF002096">
    <property type="entry name" value="HnS"/>
    <property type="match status" value="1"/>
</dbReference>
<dbReference type="SMART" id="SM00528">
    <property type="entry name" value="HNS"/>
    <property type="match status" value="1"/>
</dbReference>
<dbReference type="SUPFAM" id="SSF81273">
    <property type="entry name" value="H-NS histone-like proteins"/>
    <property type="match status" value="2"/>
</dbReference>
<sequence>MNEILKILNNIRTLRVHSRECSLEILEEILEKFKVVINERKKEEKKIKEEIAQRAIKLKKYREMLIADGINPNELLTKTNSIKSSEKRKRPKRPAKYKYINKNGDFKTWTGQGRTPSVIKNAILERKKILEDFLL</sequence>
<proteinExistence type="inferred from homology"/>
<comment type="function">
    <text evidence="2">A DNA-binding protein implicated in transcriptional repression and chromosome organization and compaction. Binds nucleation sites in AT-rich DNA and bridges them, forming higher-order nucleoprotein complexes and condensing the chromosome. A subset of genes are repressed by H-NS in association with other proteins (By similarity).</text>
</comment>
<comment type="subunit">
    <text evidence="2">Homodimer that oligomerizes on DNA into higher-order complexes that form bridges between disparate regions of DNA compacting it.</text>
</comment>
<comment type="subcellular location">
    <subcellularLocation>
        <location evidence="2">Cytoplasm</location>
        <location evidence="2">Nucleoid</location>
    </subcellularLocation>
</comment>
<comment type="similarity">
    <text evidence="3">Belongs to the histone-like protein H-NS family.</text>
</comment>
<reference key="1">
    <citation type="journal article" date="2000" name="Nature">
        <title>Genome sequence of the endocellular bacterial symbiont of aphids Buchnera sp. APS.</title>
        <authorList>
            <person name="Shigenobu S."/>
            <person name="Watanabe H."/>
            <person name="Hattori M."/>
            <person name="Sakaki Y."/>
            <person name="Ishikawa H."/>
        </authorList>
    </citation>
    <scope>NUCLEOTIDE SEQUENCE [LARGE SCALE GENOMIC DNA]</scope>
    <source>
        <strain>APS</strain>
    </source>
</reference>
<evidence type="ECO:0000250" key="1">
    <source>
        <dbReference type="UniProtKB" id="P0A1S2"/>
    </source>
</evidence>
<evidence type="ECO:0000250" key="2">
    <source>
        <dbReference type="UniProtKB" id="P0ACF8"/>
    </source>
</evidence>
<evidence type="ECO:0000305" key="3"/>
<gene>
    <name type="primary">hns</name>
    <name type="ordered locus">BU272</name>
</gene>
<name>HNS_BUCAI</name>
<accession>P57360</accession>
<organism>
    <name type="scientific">Buchnera aphidicola subsp. Acyrthosiphon pisum (strain APS)</name>
    <name type="common">Acyrthosiphon pisum symbiotic bacterium</name>
    <dbReference type="NCBI Taxonomy" id="107806"/>
    <lineage>
        <taxon>Bacteria</taxon>
        <taxon>Pseudomonadati</taxon>
        <taxon>Pseudomonadota</taxon>
        <taxon>Gammaproteobacteria</taxon>
        <taxon>Enterobacterales</taxon>
        <taxon>Erwiniaceae</taxon>
        <taxon>Buchnera</taxon>
    </lineage>
</organism>
<keyword id="KW-0963">Cytoplasm</keyword>
<keyword id="KW-0238">DNA-binding</keyword>
<keyword id="KW-1185">Reference proteome</keyword>
<keyword id="KW-0678">Repressor</keyword>
<keyword id="KW-0804">Transcription</keyword>
<keyword id="KW-0805">Transcription regulation</keyword>
<protein>
    <recommendedName>
        <fullName>DNA-binding protein H-NS homolog</fullName>
    </recommendedName>
</protein>